<comment type="function">
    <text evidence="1">Protease subunit of a proteasome-like degradation complex believed to be a general protein degrading machinery.</text>
</comment>
<comment type="catalytic activity">
    <reaction evidence="1">
        <text>ATP-dependent cleavage of peptide bonds with broad specificity.</text>
        <dbReference type="EC" id="3.4.25.2"/>
    </reaction>
</comment>
<comment type="activity regulation">
    <text evidence="1">Allosterically activated by HslU binding.</text>
</comment>
<comment type="subunit">
    <text evidence="1">A double ring-shaped homohexamer of HslV is capped on each side by a ring-shaped HslU homohexamer. The assembly of the HslU/HslV complex is dependent on binding of ATP.</text>
</comment>
<comment type="subcellular location">
    <subcellularLocation>
        <location evidence="1">Cytoplasm</location>
    </subcellularLocation>
</comment>
<comment type="similarity">
    <text evidence="1">Belongs to the peptidase T1B family. HslV subfamily.</text>
</comment>
<accession>A6UEK8</accession>
<sequence length="185" mass="19994">MSEHNPYGTMHATTIITVRKGGKVVMAGDGQVSLGQTVMKGNARKVRRLSKGDVIAGFAGATADAFTLLERLEVKLEQYPDQLMRAAVELAKDWRTNKYLRNLEAMMLVADRSVTLAITGNGDVLEPEHGTIAIGSGGNYAFAAARALMDTDRSAEEIARRALEIAGDICVYTNHNVVLETLDAE</sequence>
<feature type="chain" id="PRO_0000336796" description="ATP-dependent protease subunit HslV">
    <location>
        <begin position="1"/>
        <end position="185"/>
    </location>
</feature>
<feature type="active site" evidence="1">
    <location>
        <position position="13"/>
    </location>
</feature>
<feature type="binding site" evidence="1">
    <location>
        <position position="167"/>
    </location>
    <ligand>
        <name>Na(+)</name>
        <dbReference type="ChEBI" id="CHEBI:29101"/>
    </ligand>
</feature>
<feature type="binding site" evidence="1">
    <location>
        <position position="170"/>
    </location>
    <ligand>
        <name>Na(+)</name>
        <dbReference type="ChEBI" id="CHEBI:29101"/>
    </ligand>
</feature>
<feature type="binding site" evidence="1">
    <location>
        <position position="173"/>
    </location>
    <ligand>
        <name>Na(+)</name>
        <dbReference type="ChEBI" id="CHEBI:29101"/>
    </ligand>
</feature>
<gene>
    <name evidence="1" type="primary">hslV</name>
    <name type="ordered locus">Smed_3264</name>
</gene>
<name>HSLV_SINMW</name>
<evidence type="ECO:0000255" key="1">
    <source>
        <dbReference type="HAMAP-Rule" id="MF_00248"/>
    </source>
</evidence>
<protein>
    <recommendedName>
        <fullName evidence="1">ATP-dependent protease subunit HslV</fullName>
        <ecNumber evidence="1">3.4.25.2</ecNumber>
    </recommendedName>
</protein>
<proteinExistence type="inferred from homology"/>
<keyword id="KW-0021">Allosteric enzyme</keyword>
<keyword id="KW-0963">Cytoplasm</keyword>
<keyword id="KW-0378">Hydrolase</keyword>
<keyword id="KW-0479">Metal-binding</keyword>
<keyword id="KW-0645">Protease</keyword>
<keyword id="KW-0915">Sodium</keyword>
<keyword id="KW-0888">Threonine protease</keyword>
<organism>
    <name type="scientific">Sinorhizobium medicae (strain WSM419)</name>
    <name type="common">Ensifer medicae</name>
    <dbReference type="NCBI Taxonomy" id="366394"/>
    <lineage>
        <taxon>Bacteria</taxon>
        <taxon>Pseudomonadati</taxon>
        <taxon>Pseudomonadota</taxon>
        <taxon>Alphaproteobacteria</taxon>
        <taxon>Hyphomicrobiales</taxon>
        <taxon>Rhizobiaceae</taxon>
        <taxon>Sinorhizobium/Ensifer group</taxon>
        <taxon>Sinorhizobium</taxon>
    </lineage>
</organism>
<dbReference type="EC" id="3.4.25.2" evidence="1"/>
<dbReference type="EMBL" id="CP000738">
    <property type="protein sequence ID" value="ABR62088.1"/>
    <property type="molecule type" value="Genomic_DNA"/>
</dbReference>
<dbReference type="RefSeq" id="WP_012067469.1">
    <property type="nucleotide sequence ID" value="NC_009636.1"/>
</dbReference>
<dbReference type="RefSeq" id="YP_001328923.1">
    <property type="nucleotide sequence ID" value="NC_009636.1"/>
</dbReference>
<dbReference type="SMR" id="A6UEK8"/>
<dbReference type="STRING" id="366394.Smed_3264"/>
<dbReference type="MEROPS" id="T01.006"/>
<dbReference type="GeneID" id="61610846"/>
<dbReference type="KEGG" id="smd:Smed_3264"/>
<dbReference type="PATRIC" id="fig|366394.8.peg.6504"/>
<dbReference type="eggNOG" id="COG5405">
    <property type="taxonomic scope" value="Bacteria"/>
</dbReference>
<dbReference type="HOGENOM" id="CLU_093872_1_0_5"/>
<dbReference type="OrthoDB" id="9804884at2"/>
<dbReference type="Proteomes" id="UP000001108">
    <property type="component" value="Chromosome"/>
</dbReference>
<dbReference type="GO" id="GO:0009376">
    <property type="term" value="C:HslUV protease complex"/>
    <property type="evidence" value="ECO:0007669"/>
    <property type="project" value="UniProtKB-UniRule"/>
</dbReference>
<dbReference type="GO" id="GO:0005839">
    <property type="term" value="C:proteasome core complex"/>
    <property type="evidence" value="ECO:0007669"/>
    <property type="project" value="InterPro"/>
</dbReference>
<dbReference type="GO" id="GO:0046872">
    <property type="term" value="F:metal ion binding"/>
    <property type="evidence" value="ECO:0007669"/>
    <property type="project" value="UniProtKB-KW"/>
</dbReference>
<dbReference type="GO" id="GO:0004298">
    <property type="term" value="F:threonine-type endopeptidase activity"/>
    <property type="evidence" value="ECO:0007669"/>
    <property type="project" value="UniProtKB-KW"/>
</dbReference>
<dbReference type="GO" id="GO:0051603">
    <property type="term" value="P:proteolysis involved in protein catabolic process"/>
    <property type="evidence" value="ECO:0007669"/>
    <property type="project" value="InterPro"/>
</dbReference>
<dbReference type="CDD" id="cd01913">
    <property type="entry name" value="protease_HslV"/>
    <property type="match status" value="1"/>
</dbReference>
<dbReference type="FunFam" id="3.60.20.10:FF:000002">
    <property type="entry name" value="ATP-dependent protease subunit HslV"/>
    <property type="match status" value="1"/>
</dbReference>
<dbReference type="Gene3D" id="3.60.20.10">
    <property type="entry name" value="Glutamine Phosphoribosylpyrophosphate, subunit 1, domain 1"/>
    <property type="match status" value="1"/>
</dbReference>
<dbReference type="HAMAP" id="MF_00248">
    <property type="entry name" value="HslV"/>
    <property type="match status" value="1"/>
</dbReference>
<dbReference type="InterPro" id="IPR022281">
    <property type="entry name" value="ATP-dep_Prtase_HsIV_su"/>
</dbReference>
<dbReference type="InterPro" id="IPR029055">
    <property type="entry name" value="Ntn_hydrolases_N"/>
</dbReference>
<dbReference type="InterPro" id="IPR001353">
    <property type="entry name" value="Proteasome_sua/b"/>
</dbReference>
<dbReference type="InterPro" id="IPR023333">
    <property type="entry name" value="Proteasome_suB-type"/>
</dbReference>
<dbReference type="NCBIfam" id="TIGR03692">
    <property type="entry name" value="ATP_dep_HslV"/>
    <property type="match status" value="1"/>
</dbReference>
<dbReference type="NCBIfam" id="NF003964">
    <property type="entry name" value="PRK05456.1"/>
    <property type="match status" value="1"/>
</dbReference>
<dbReference type="PANTHER" id="PTHR32194:SF7">
    <property type="entry name" value="ATP-DEPENDENT PROTEASE SUBUNIT HSLV"/>
    <property type="match status" value="1"/>
</dbReference>
<dbReference type="PANTHER" id="PTHR32194">
    <property type="entry name" value="METALLOPROTEASE TLDD"/>
    <property type="match status" value="1"/>
</dbReference>
<dbReference type="Pfam" id="PF00227">
    <property type="entry name" value="Proteasome"/>
    <property type="match status" value="1"/>
</dbReference>
<dbReference type="PIRSF" id="PIRSF039093">
    <property type="entry name" value="HslV"/>
    <property type="match status" value="1"/>
</dbReference>
<dbReference type="SUPFAM" id="SSF56235">
    <property type="entry name" value="N-terminal nucleophile aminohydrolases (Ntn hydrolases)"/>
    <property type="match status" value="1"/>
</dbReference>
<dbReference type="PROSITE" id="PS51476">
    <property type="entry name" value="PROTEASOME_BETA_2"/>
    <property type="match status" value="1"/>
</dbReference>
<reference key="1">
    <citation type="submission" date="2007-06" db="EMBL/GenBank/DDBJ databases">
        <title>Complete sequence of Sinorhizobium medicae WSM419 chromosome.</title>
        <authorList>
            <consortium name="US DOE Joint Genome Institute"/>
            <person name="Copeland A."/>
            <person name="Lucas S."/>
            <person name="Lapidus A."/>
            <person name="Barry K."/>
            <person name="Glavina del Rio T."/>
            <person name="Dalin E."/>
            <person name="Tice H."/>
            <person name="Pitluck S."/>
            <person name="Chain P."/>
            <person name="Malfatti S."/>
            <person name="Shin M."/>
            <person name="Vergez L."/>
            <person name="Schmutz J."/>
            <person name="Larimer F."/>
            <person name="Land M."/>
            <person name="Hauser L."/>
            <person name="Kyrpides N."/>
            <person name="Mikhailova N."/>
            <person name="Reeve W.G."/>
            <person name="Richardson P."/>
        </authorList>
    </citation>
    <scope>NUCLEOTIDE SEQUENCE [LARGE SCALE GENOMIC DNA]</scope>
    <source>
        <strain>WSM419</strain>
    </source>
</reference>